<keyword id="KW-0067">ATP-binding</keyword>
<keyword id="KW-0997">Cell inner membrane</keyword>
<keyword id="KW-1003">Cell membrane</keyword>
<keyword id="KW-0472">Membrane</keyword>
<keyword id="KW-0547">Nucleotide-binding</keyword>
<keyword id="KW-1278">Translocase</keyword>
<keyword id="KW-0812">Transmembrane</keyword>
<keyword id="KW-1133">Transmembrane helix</keyword>
<keyword id="KW-0813">Transport</keyword>
<sequence length="707" mass="79579">MDSQKNTNLALQALEVLAQYHNISINPEEIKHKFDIDGHGLNQTKWLLAAKSLGLKVRTANKTVDRLPFLHLPALAWRDDGEHFILLKIDQETDRYLIFDLIQKNPIVLDKNEFEERYQSKVILIASRASIVGNLAKFDFTWFIPAVIKYRKIFIETLIVSIFLQIFALITPLFFQVVMDKVLVHRGFSTLNVITVALAIVVLFEIILGGLRTYVFAHSTSRIDVELGARLFRHLLALPISYFEARRVGDTVARVRELDQIRNFLTGQALTSILDLLFSFIFFAVMWYYSPKLTLVVLGSLPCYVIWSVFISPILRRRLDDKFARNADNQSFLVESVTAINTIKAMAISPQMTNIWDKQLASYVAVSFKVTVLATIGQQGIQLIQKAVMVINLWLGAHLVISGDLSIGQLIAFNMLAGQIISPVIRLAQIWQDFQQVGISVTRLGDVLNSPTENNTASVSLPEIQGEISFRNIKFRYKPDSPMILNNINLDISQGEVIGIVGRSGSGKSTLTKLIQRFYIPEQGQVLIDGHDLALADPNWLRRQVGVVLQDNVLLNRSIRENIALTNPGMPMEKVIAAAKLAGAHDFISELREGYNTVVGEQGAGLSGGQRQRIAIARALVNNPRILIFDEATSALDYESENIIMHNMHKICQNRTVLIIAHRLSTVKNADRIIVMDKGEIIEQGKHQELLKDEKGLYSYLHQLQVN</sequence>
<reference key="1">
    <citation type="journal article" date="1990" name="Nucleic Acids Res.">
        <title>Sequence of the lktB gene from Actinobacillus actinomycetemcomitans.</title>
        <authorList>
            <person name="Guthmiller J.M."/>
            <person name="Kolodrubetz D."/>
            <person name="Cagle M.P."/>
            <person name="Kraig E."/>
        </authorList>
    </citation>
    <scope>NUCLEOTIDE SEQUENCE [GENOMIC DNA]</scope>
</reference>
<reference key="2">
    <citation type="journal article" date="1991" name="Microb. Pathog.">
        <title>Structure and function of the B and D genes of the Actinobacillus actinomycetemcomitans leukotoxin complex.</title>
        <authorList>
            <person name="Lally E.T."/>
            <person name="Golub E.E."/>
            <person name="Kieba I.R."/>
            <person name="Taichman N.S."/>
            <person name="Decker S."/>
            <person name="Berthold P."/>
            <person name="Gibson C.W."/>
            <person name="Demuth D.R."/>
            <person name="Rosenbloom J."/>
        </authorList>
    </citation>
    <scope>NUCLEOTIDE SEQUENCE [GENOMIC DNA]</scope>
</reference>
<reference key="3">
    <citation type="journal article" date="1994" name="Infect. Immun.">
        <title>Regulation of Actinobacillus actinomycetemcomitans leukotoxin expression: analysis of the promoter regions of leukotoxic and minimally leukotoxic strains.</title>
        <authorList>
            <person name="Brogan J.M."/>
            <person name="Lally E.T."/>
            <person name="Poulsen K."/>
            <person name="Kilian M."/>
            <person name="Demuth D.R."/>
        </authorList>
    </citation>
    <scope>INDUCTION</scope>
    <scope>GENE NAME</scope>
    <source>
        <strain>652</strain>
        <strain>JP2</strain>
    </source>
</reference>
<reference key="4">
    <citation type="journal article" date="1995" name="Microb. Pathog.">
        <title>Mutational analysis of the putative leukotoxin transport genes in Actinobacillus actinomycetemcomitans.</title>
        <authorList>
            <person name="Guthmiller J.M."/>
            <person name="Kolodrubetz D."/>
            <person name="Kraig E."/>
        </authorList>
    </citation>
    <scope>DISRUPTION PHENOTYPE</scope>
    <scope>FUNCTION</scope>
</reference>
<reference key="5">
    <citation type="journal article" date="2007" name="Gene">
        <title>TdeA, a TolC-like protein required for toxin and drug export in Aggregatibacter (Actinobacillus) actinomycetemcomitans.</title>
        <authorList>
            <person name="Crosby J.A."/>
            <person name="Kachlany S.C."/>
        </authorList>
    </citation>
    <scope>SUBUNIT</scope>
    <source>
        <strain>IDH781</strain>
    </source>
</reference>
<feature type="chain" id="PRO_0000092377" description="Leukotoxin export ATP-binding protein LtxB">
    <location>
        <begin position="1"/>
        <end position="707"/>
    </location>
</feature>
<feature type="transmembrane region" description="Helical" evidence="2">
    <location>
        <begin position="158"/>
        <end position="178"/>
    </location>
</feature>
<feature type="transmembrane region" description="Helical" evidence="2">
    <location>
        <begin position="191"/>
        <end position="211"/>
    </location>
</feature>
<feature type="transmembrane region" description="Helical" evidence="2">
    <location>
        <begin position="269"/>
        <end position="289"/>
    </location>
</feature>
<feature type="transmembrane region" description="Helical" evidence="2">
    <location>
        <begin position="295"/>
        <end position="315"/>
    </location>
</feature>
<feature type="transmembrane region" description="Helical" evidence="2">
    <location>
        <begin position="387"/>
        <end position="407"/>
    </location>
</feature>
<feature type="domain" description="Peptidase C39" evidence="3">
    <location>
        <begin position="4"/>
        <end position="125"/>
    </location>
</feature>
<feature type="domain" description="ABC transmembrane type-1" evidence="5">
    <location>
        <begin position="158"/>
        <end position="436"/>
    </location>
</feature>
<feature type="domain" description="ABC transporter" evidence="4">
    <location>
        <begin position="468"/>
        <end position="703"/>
    </location>
</feature>
<feature type="active site" evidence="3">
    <location>
        <position position="83"/>
    </location>
</feature>
<feature type="binding site" evidence="4">
    <location>
        <begin position="502"/>
        <end position="509"/>
    </location>
    <ligand>
        <name>ATP</name>
        <dbReference type="ChEBI" id="CHEBI:30616"/>
    </ligand>
</feature>
<organism>
    <name type="scientific">Aggregatibacter actinomycetemcomitans</name>
    <name type="common">Actinobacillus actinomycetemcomitans</name>
    <name type="synonym">Haemophilus actinomycetemcomitans</name>
    <dbReference type="NCBI Taxonomy" id="714"/>
    <lineage>
        <taxon>Bacteria</taxon>
        <taxon>Pseudomonadati</taxon>
        <taxon>Pseudomonadota</taxon>
        <taxon>Gammaproteobacteria</taxon>
        <taxon>Pasteurellales</taxon>
        <taxon>Pasteurellaceae</taxon>
        <taxon>Aggregatibacter</taxon>
    </lineage>
</organism>
<accession>P23702</accession>
<gene>
    <name evidence="12" type="primary">ltxB</name>
    <name evidence="9" type="synonym">AaLtb</name>
    <name evidence="10" type="synonym">lktB</name>
</gene>
<proteinExistence type="evidence at protein level"/>
<comment type="function">
    <text evidence="11">Involved in the export of the LtxA leukotoxin.</text>
</comment>
<comment type="catalytic activity">
    <reaction evidence="1">
        <text>ATP + H2O + proteinSide 1 = ADP + phosphate + proteinSide 2.</text>
        <dbReference type="EC" id="7.4.2.5"/>
    </reaction>
</comment>
<comment type="subunit">
    <text evidence="8">Probably part of a complex composed of LtxB, LtxD and TdeA, which forms a single transport channel across the two membranes.</text>
</comment>
<comment type="subcellular location">
    <subcellularLocation>
        <location evidence="13">Cell inner membrane</location>
        <topology evidence="2">Multi-pass membrane protein</topology>
    </subcellularLocation>
</comment>
<comment type="induction">
    <text evidence="7">Levels of toxin expression vary greatly among strains. Highly leukotoxic strains (JP2-type strains) produce more LtxA protein and ltx mRNA than minimally leukotoxic strains (652-type strains). Variations are probably due to different types of promoters.</text>
</comment>
<comment type="disruption phenotype">
    <text evidence="6">Mutation has no effect on the levels of leukotoxin mRNA, but mutants have significantly less total leukotoxin than the parent strain.</text>
</comment>
<comment type="similarity">
    <text evidence="13">Belongs to the ABC transporter superfamily. Protein-1 exporter (TC 3.A.1.109) family.</text>
</comment>
<comment type="caution">
    <text evidence="13">Leu-9 is present instead of the conserved Cys which is expected to be the active site residue of peptidase C39. Thus they are presumed to be without peptidase activity.</text>
</comment>
<dbReference type="EC" id="7.4.2.5" evidence="1"/>
<dbReference type="EMBL" id="X53955">
    <property type="protein sequence ID" value="CAA37906.1"/>
    <property type="molecule type" value="Genomic_DNA"/>
</dbReference>
<dbReference type="PIR" id="A61378">
    <property type="entry name" value="A61378"/>
</dbReference>
<dbReference type="RefSeq" id="WP_025298517.1">
    <property type="nucleotide sequence ID" value="NZ_JABKAF010000001.1"/>
</dbReference>
<dbReference type="SMR" id="P23702"/>
<dbReference type="STRING" id="714.ACT75_09610"/>
<dbReference type="TCDB" id="3.A.1.109.8">
    <property type="family name" value="the atp-binding cassette (abc) superfamily"/>
</dbReference>
<dbReference type="eggNOG" id="COG2274">
    <property type="taxonomic scope" value="Bacteria"/>
</dbReference>
<dbReference type="GO" id="GO:0005886">
    <property type="term" value="C:plasma membrane"/>
    <property type="evidence" value="ECO:0007669"/>
    <property type="project" value="UniProtKB-SubCell"/>
</dbReference>
<dbReference type="GO" id="GO:0030256">
    <property type="term" value="C:type I protein secretion system complex"/>
    <property type="evidence" value="ECO:0007669"/>
    <property type="project" value="InterPro"/>
</dbReference>
<dbReference type="GO" id="GO:0140359">
    <property type="term" value="F:ABC-type transporter activity"/>
    <property type="evidence" value="ECO:0007669"/>
    <property type="project" value="InterPro"/>
</dbReference>
<dbReference type="GO" id="GO:0005524">
    <property type="term" value="F:ATP binding"/>
    <property type="evidence" value="ECO:0007669"/>
    <property type="project" value="UniProtKB-KW"/>
</dbReference>
<dbReference type="GO" id="GO:0016887">
    <property type="term" value="F:ATP hydrolysis activity"/>
    <property type="evidence" value="ECO:0007669"/>
    <property type="project" value="InterPro"/>
</dbReference>
<dbReference type="GO" id="GO:0034040">
    <property type="term" value="F:ATPase-coupled lipid transmembrane transporter activity"/>
    <property type="evidence" value="ECO:0007669"/>
    <property type="project" value="TreeGrafter"/>
</dbReference>
<dbReference type="GO" id="GO:0008233">
    <property type="term" value="F:peptidase activity"/>
    <property type="evidence" value="ECO:0007669"/>
    <property type="project" value="InterPro"/>
</dbReference>
<dbReference type="GO" id="GO:0030253">
    <property type="term" value="P:protein secretion by the type I secretion system"/>
    <property type="evidence" value="ECO:0007669"/>
    <property type="project" value="InterPro"/>
</dbReference>
<dbReference type="GO" id="GO:0006508">
    <property type="term" value="P:proteolysis"/>
    <property type="evidence" value="ECO:0007669"/>
    <property type="project" value="InterPro"/>
</dbReference>
<dbReference type="CDD" id="cd18588">
    <property type="entry name" value="ABC_6TM_CyaB_HlyB_like"/>
    <property type="match status" value="1"/>
</dbReference>
<dbReference type="CDD" id="cd03252">
    <property type="entry name" value="ABCC_Hemolysin"/>
    <property type="match status" value="1"/>
</dbReference>
<dbReference type="CDD" id="cd02417">
    <property type="entry name" value="Peptidase_C39_likeA"/>
    <property type="match status" value="1"/>
</dbReference>
<dbReference type="FunFam" id="3.40.50.300:FF:000299">
    <property type="entry name" value="ABC transporter ATP-binding protein/permease"/>
    <property type="match status" value="1"/>
</dbReference>
<dbReference type="FunFam" id="1.20.1560.10:FF:000056">
    <property type="entry name" value="Alpha-hemolysin translocation ATP-binding protein HlyB"/>
    <property type="match status" value="1"/>
</dbReference>
<dbReference type="Gene3D" id="1.20.1560.10">
    <property type="entry name" value="ABC transporter type 1, transmembrane domain"/>
    <property type="match status" value="1"/>
</dbReference>
<dbReference type="Gene3D" id="3.90.70.10">
    <property type="entry name" value="Cysteine proteinases"/>
    <property type="match status" value="1"/>
</dbReference>
<dbReference type="Gene3D" id="3.40.50.300">
    <property type="entry name" value="P-loop containing nucleotide triphosphate hydrolases"/>
    <property type="match status" value="1"/>
</dbReference>
<dbReference type="InterPro" id="IPR003593">
    <property type="entry name" value="AAA+_ATPase"/>
</dbReference>
<dbReference type="InterPro" id="IPR011527">
    <property type="entry name" value="ABC1_TM_dom"/>
</dbReference>
<dbReference type="InterPro" id="IPR036640">
    <property type="entry name" value="ABC1_TM_sf"/>
</dbReference>
<dbReference type="InterPro" id="IPR003439">
    <property type="entry name" value="ABC_transporter-like_ATP-bd"/>
</dbReference>
<dbReference type="InterPro" id="IPR017871">
    <property type="entry name" value="ABC_transporter-like_CS"/>
</dbReference>
<dbReference type="InterPro" id="IPR010132">
    <property type="entry name" value="ATPase_T1SS_HlyB"/>
</dbReference>
<dbReference type="InterPro" id="IPR027417">
    <property type="entry name" value="P-loop_NTPase"/>
</dbReference>
<dbReference type="InterPro" id="IPR005074">
    <property type="entry name" value="Peptidase_C39"/>
</dbReference>
<dbReference type="InterPro" id="IPR039395">
    <property type="entry name" value="Peptidase_C39-like_A"/>
</dbReference>
<dbReference type="InterPro" id="IPR039421">
    <property type="entry name" value="Type_1_exporter"/>
</dbReference>
<dbReference type="NCBIfam" id="TIGR01846">
    <property type="entry name" value="type_I_sec_HlyB"/>
    <property type="match status" value="1"/>
</dbReference>
<dbReference type="PANTHER" id="PTHR24221">
    <property type="entry name" value="ATP-BINDING CASSETTE SUB-FAMILY B"/>
    <property type="match status" value="1"/>
</dbReference>
<dbReference type="PANTHER" id="PTHR24221:SF647">
    <property type="entry name" value="BLL6336 PROTEIN"/>
    <property type="match status" value="1"/>
</dbReference>
<dbReference type="Pfam" id="PF00664">
    <property type="entry name" value="ABC_membrane"/>
    <property type="match status" value="1"/>
</dbReference>
<dbReference type="Pfam" id="PF00005">
    <property type="entry name" value="ABC_tran"/>
    <property type="match status" value="1"/>
</dbReference>
<dbReference type="Pfam" id="PF03412">
    <property type="entry name" value="Peptidase_C39"/>
    <property type="match status" value="1"/>
</dbReference>
<dbReference type="SMART" id="SM00382">
    <property type="entry name" value="AAA"/>
    <property type="match status" value="1"/>
</dbReference>
<dbReference type="SUPFAM" id="SSF90123">
    <property type="entry name" value="ABC transporter transmembrane region"/>
    <property type="match status" value="1"/>
</dbReference>
<dbReference type="SUPFAM" id="SSF52540">
    <property type="entry name" value="P-loop containing nucleoside triphosphate hydrolases"/>
    <property type="match status" value="1"/>
</dbReference>
<dbReference type="PROSITE" id="PS50929">
    <property type="entry name" value="ABC_TM1F"/>
    <property type="match status" value="1"/>
</dbReference>
<dbReference type="PROSITE" id="PS00211">
    <property type="entry name" value="ABC_TRANSPORTER_1"/>
    <property type="match status" value="1"/>
</dbReference>
<dbReference type="PROSITE" id="PS50893">
    <property type="entry name" value="ABC_TRANSPORTER_2"/>
    <property type="match status" value="1"/>
</dbReference>
<dbReference type="PROSITE" id="PS50990">
    <property type="entry name" value="PEPTIDASE_C39"/>
    <property type="match status" value="1"/>
</dbReference>
<name>LTXB_AGGAC</name>
<evidence type="ECO:0000250" key="1"/>
<evidence type="ECO:0000255" key="2"/>
<evidence type="ECO:0000255" key="3">
    <source>
        <dbReference type="PROSITE-ProRule" id="PRU00362"/>
    </source>
</evidence>
<evidence type="ECO:0000255" key="4">
    <source>
        <dbReference type="PROSITE-ProRule" id="PRU00434"/>
    </source>
</evidence>
<evidence type="ECO:0000255" key="5">
    <source>
        <dbReference type="PROSITE-ProRule" id="PRU00441"/>
    </source>
</evidence>
<evidence type="ECO:0000269" key="6">
    <source>
    </source>
</evidence>
<evidence type="ECO:0000269" key="7">
    <source>
    </source>
</evidence>
<evidence type="ECO:0000303" key="8">
    <source>
    </source>
</evidence>
<evidence type="ECO:0000303" key="9">
    <source>
    </source>
</evidence>
<evidence type="ECO:0000303" key="10">
    <source>
    </source>
</evidence>
<evidence type="ECO:0000303" key="11">
    <source>
    </source>
</evidence>
<evidence type="ECO:0000303" key="12">
    <source>
    </source>
</evidence>
<evidence type="ECO:0000305" key="13"/>
<protein>
    <recommendedName>
        <fullName>Leukotoxin export ATP-binding protein LtxB</fullName>
        <ecNumber evidence="1">7.4.2.5</ecNumber>
    </recommendedName>
</protein>